<dbReference type="EMBL" id="AK096217">
    <property type="protein sequence ID" value="BAC04727.1"/>
    <property type="molecule type" value="mRNA"/>
</dbReference>
<dbReference type="EMBL" id="AL031447">
    <property type="status" value="NOT_ANNOTATED_CDS"/>
    <property type="molecule type" value="Genomic_DNA"/>
</dbReference>
<dbReference type="EMBL" id="BC005114">
    <property type="protein sequence ID" value="AAH05114.1"/>
    <property type="molecule type" value="mRNA"/>
</dbReference>
<dbReference type="EMBL" id="BC092427">
    <property type="protein sequence ID" value="AAH92427.1"/>
    <property type="molecule type" value="mRNA"/>
</dbReference>
<dbReference type="CCDS" id="CCDS55572.1">
    <molecule id="Q8WTV1-1"/>
</dbReference>
<dbReference type="CCDS" id="CCDS55573.1">
    <molecule id="Q8WTV1-3"/>
</dbReference>
<dbReference type="CCDS" id="CCDS86.1">
    <molecule id="Q8WTV1-4"/>
</dbReference>
<dbReference type="RefSeq" id="NP_001182681.1">
    <molecule id="Q8WTV1-3"/>
    <property type="nucleotide sequence ID" value="NM_001195752.2"/>
</dbReference>
<dbReference type="RefSeq" id="NP_001182682.1">
    <molecule id="Q8WTV1-1"/>
    <property type="nucleotide sequence ID" value="NM_001195753.2"/>
</dbReference>
<dbReference type="RefSeq" id="NP_612359.2">
    <molecule id="Q8WTV1-4"/>
    <property type="nucleotide sequence ID" value="NM_138350.3"/>
</dbReference>
<dbReference type="RefSeq" id="XP_005263589.1">
    <property type="nucleotide sequence ID" value="XM_005263532.3"/>
</dbReference>
<dbReference type="SMR" id="Q8WTV1"/>
<dbReference type="BioGRID" id="124694">
    <property type="interactions" value="81"/>
</dbReference>
<dbReference type="ELM" id="Q8WTV1"/>
<dbReference type="FunCoup" id="Q8WTV1">
    <property type="interactions" value="123"/>
</dbReference>
<dbReference type="IntAct" id="Q8WTV1">
    <property type="interactions" value="80"/>
</dbReference>
<dbReference type="STRING" id="9606.ENSP00000054650"/>
<dbReference type="GlyGen" id="Q8WTV1">
    <property type="glycosylation" value="1 site, 1 O-linked glycan (1 site)"/>
</dbReference>
<dbReference type="iPTMnet" id="Q8WTV1"/>
<dbReference type="PhosphoSitePlus" id="Q8WTV1"/>
<dbReference type="BioMuta" id="THAP3"/>
<dbReference type="DMDM" id="29839586"/>
<dbReference type="jPOST" id="Q8WTV1"/>
<dbReference type="MassIVE" id="Q8WTV1"/>
<dbReference type="PaxDb" id="9606-ENSP00000054650"/>
<dbReference type="PeptideAtlas" id="Q8WTV1"/>
<dbReference type="ProteomicsDB" id="74606">
    <molecule id="Q8WTV1-1"/>
</dbReference>
<dbReference type="ProteomicsDB" id="74607">
    <molecule id="Q8WTV1-3"/>
</dbReference>
<dbReference type="Pumba" id="Q8WTV1"/>
<dbReference type="Antibodypedia" id="27449">
    <property type="antibodies" value="59 antibodies from 18 providers"/>
</dbReference>
<dbReference type="DNASU" id="90326"/>
<dbReference type="Ensembl" id="ENST00000054650.9">
    <molecule id="Q8WTV1-1"/>
    <property type="protein sequence ID" value="ENSP00000054650.4"/>
    <property type="gene ID" value="ENSG00000041988.16"/>
</dbReference>
<dbReference type="Ensembl" id="ENST00000307896.10">
    <molecule id="Q8WTV1-3"/>
    <property type="protein sequence ID" value="ENSP00000311537.6"/>
    <property type="gene ID" value="ENSG00000041988.16"/>
</dbReference>
<dbReference type="Ensembl" id="ENST00000377627.7">
    <molecule id="Q8WTV1-4"/>
    <property type="protein sequence ID" value="ENSP00000366854.3"/>
    <property type="gene ID" value="ENSG00000041988.16"/>
</dbReference>
<dbReference type="GeneID" id="90326"/>
<dbReference type="KEGG" id="hsa:90326"/>
<dbReference type="MANE-Select" id="ENST00000054650.9">
    <property type="protein sequence ID" value="ENSP00000054650.4"/>
    <property type="RefSeq nucleotide sequence ID" value="NM_001195753.2"/>
    <property type="RefSeq protein sequence ID" value="NP_001182682.1"/>
</dbReference>
<dbReference type="UCSC" id="uc001aoc.4">
    <molecule id="Q8WTV1-1"/>
    <property type="organism name" value="human"/>
</dbReference>
<dbReference type="AGR" id="HGNC:20855"/>
<dbReference type="CTD" id="90326"/>
<dbReference type="DisGeNET" id="90326"/>
<dbReference type="GeneCards" id="THAP3"/>
<dbReference type="HGNC" id="HGNC:20855">
    <property type="gene designation" value="THAP3"/>
</dbReference>
<dbReference type="HPA" id="ENSG00000041988">
    <property type="expression patterns" value="Low tissue specificity"/>
</dbReference>
<dbReference type="MIM" id="612532">
    <property type="type" value="gene"/>
</dbReference>
<dbReference type="neXtProt" id="NX_Q8WTV1"/>
<dbReference type="OpenTargets" id="ENSG00000041988"/>
<dbReference type="PharmGKB" id="PA134987111"/>
<dbReference type="VEuPathDB" id="HostDB:ENSG00000041988"/>
<dbReference type="eggNOG" id="ENOG502S14P">
    <property type="taxonomic scope" value="Eukaryota"/>
</dbReference>
<dbReference type="GeneTree" id="ENSGT00940000162344"/>
<dbReference type="HOGENOM" id="CLU_076186_1_0_1"/>
<dbReference type="InParanoid" id="Q8WTV1"/>
<dbReference type="OMA" id="ACKGHWG"/>
<dbReference type="OrthoDB" id="6496718at2759"/>
<dbReference type="PAN-GO" id="Q8WTV1">
    <property type="GO annotations" value="0 GO annotations based on evolutionary models"/>
</dbReference>
<dbReference type="PhylomeDB" id="Q8WTV1"/>
<dbReference type="TreeFam" id="TF330127"/>
<dbReference type="PathwayCommons" id="Q8WTV1"/>
<dbReference type="SignaLink" id="Q8WTV1"/>
<dbReference type="BioGRID-ORCS" id="90326">
    <property type="hits" value="22 hits in 1176 CRISPR screens"/>
</dbReference>
<dbReference type="ChiTaRS" id="THAP3">
    <property type="organism name" value="human"/>
</dbReference>
<dbReference type="GenomeRNAi" id="90326"/>
<dbReference type="Pharos" id="Q8WTV1">
    <property type="development level" value="Tdark"/>
</dbReference>
<dbReference type="PRO" id="PR:Q8WTV1"/>
<dbReference type="Proteomes" id="UP000005640">
    <property type="component" value="Chromosome 1"/>
</dbReference>
<dbReference type="RNAct" id="Q8WTV1">
    <property type="molecule type" value="protein"/>
</dbReference>
<dbReference type="Bgee" id="ENSG00000041988">
    <property type="expression patterns" value="Expressed in apex of heart and 103 other cell types or tissues"/>
</dbReference>
<dbReference type="ExpressionAtlas" id="Q8WTV1">
    <property type="expression patterns" value="baseline and differential"/>
</dbReference>
<dbReference type="GO" id="GO:0003677">
    <property type="term" value="F:DNA binding"/>
    <property type="evidence" value="ECO:0007669"/>
    <property type="project" value="UniProtKB-KW"/>
</dbReference>
<dbReference type="GO" id="GO:0008270">
    <property type="term" value="F:zinc ion binding"/>
    <property type="evidence" value="ECO:0007669"/>
    <property type="project" value="UniProtKB-KW"/>
</dbReference>
<dbReference type="GO" id="GO:0045944">
    <property type="term" value="P:positive regulation of transcription by RNA polymerase II"/>
    <property type="evidence" value="ECO:0000314"/>
    <property type="project" value="ARUK-UCL"/>
</dbReference>
<dbReference type="InterPro" id="IPR026520">
    <property type="entry name" value="THAP3"/>
</dbReference>
<dbReference type="InterPro" id="IPR006612">
    <property type="entry name" value="THAP_Znf"/>
</dbReference>
<dbReference type="PANTHER" id="PTHR47120">
    <property type="entry name" value="THAP DOMAIN-CONTAINING PROTEIN 3"/>
    <property type="match status" value="1"/>
</dbReference>
<dbReference type="PANTHER" id="PTHR47120:SF1">
    <property type="entry name" value="THAP DOMAIN-CONTAINING PROTEIN 3"/>
    <property type="match status" value="1"/>
</dbReference>
<dbReference type="Pfam" id="PF05485">
    <property type="entry name" value="THAP"/>
    <property type="match status" value="1"/>
</dbReference>
<dbReference type="SMART" id="SM00692">
    <property type="entry name" value="DM3"/>
    <property type="match status" value="1"/>
</dbReference>
<dbReference type="SMART" id="SM00980">
    <property type="entry name" value="THAP"/>
    <property type="match status" value="1"/>
</dbReference>
<dbReference type="SUPFAM" id="SSF57716">
    <property type="entry name" value="Glucocorticoid receptor-like (DNA-binding domain)"/>
    <property type="match status" value="1"/>
</dbReference>
<dbReference type="PROSITE" id="PS50950">
    <property type="entry name" value="ZF_THAP"/>
    <property type="match status" value="1"/>
</dbReference>
<comment type="function">
    <text evidence="3">Component of a THAP1/THAP3-HCFC1-OGT complex that is required for the regulation of the transcriptional activity of RRM1.</text>
</comment>
<comment type="subunit">
    <text evidence="3">Component of a THAP1/THAP3-HCFC1-OGT complex that contains at least, either THAP1 or THAP3, HCFC1 and OGT. Interacts directly with OGT and HCFC1 (via its HBM).</text>
</comment>
<comment type="interaction">
    <interactant intactId="EBI-17438286">
        <id>Q8WTV1</id>
    </interactant>
    <interactant intactId="EBI-10988864">
        <id>P46379-2</id>
        <label>BAG6</label>
    </interactant>
    <organismsDiffer>false</organismsDiffer>
    <experiments>3</experiments>
</comment>
<comment type="interaction">
    <interactant intactId="EBI-17438286">
        <id>Q8WTV1</id>
    </interactant>
    <interactant intactId="EBI-25837549">
        <id>P28329-3</id>
        <label>CHAT</label>
    </interactant>
    <organismsDiffer>false</organismsDiffer>
    <experiments>3</experiments>
</comment>
<comment type="interaction">
    <interactant intactId="EBI-17438286">
        <id>Q8WTV1</id>
    </interactant>
    <interactant intactId="EBI-12593112">
        <id>O75190-2</id>
        <label>DNAJB6</label>
    </interactant>
    <organismsDiffer>false</organismsDiffer>
    <experiments>3</experiments>
</comment>
<comment type="interaction">
    <interactant intactId="EBI-17438286">
        <id>Q8WTV1</id>
    </interactant>
    <interactant intactId="EBI-395638">
        <id>O14645</id>
        <label>DNALI1</label>
    </interactant>
    <organismsDiffer>false</organismsDiffer>
    <experiments>3</experiments>
</comment>
<comment type="interaction">
    <interactant intactId="EBI-17438286">
        <id>Q8WTV1</id>
    </interactant>
    <interactant intactId="EBI-1056902">
        <id>P15311</id>
        <label>EZR</label>
    </interactant>
    <organismsDiffer>false</organismsDiffer>
    <experiments>3</experiments>
</comment>
<comment type="interaction">
    <interactant intactId="EBI-17438286">
        <id>Q8WTV1</id>
    </interactant>
    <interactant intactId="EBI-348399">
        <id>P22607</id>
        <label>FGFR3</label>
    </interactant>
    <organismsDiffer>false</organismsDiffer>
    <experiments>3</experiments>
</comment>
<comment type="interaction">
    <interactant intactId="EBI-17438286">
        <id>Q8WTV1</id>
    </interactant>
    <interactant intactId="EBI-8285963">
        <id>Q14957</id>
        <label>GRIN2C</label>
    </interactant>
    <organismsDiffer>false</organismsDiffer>
    <experiments>3</experiments>
</comment>
<comment type="interaction">
    <interactant intactId="EBI-17438286">
        <id>Q8WTV1</id>
    </interactant>
    <interactant intactId="EBI-6380495">
        <id>Q92759</id>
        <label>GTF2H4</label>
    </interactant>
    <organismsDiffer>false</organismsDiffer>
    <experiments>3</experiments>
</comment>
<comment type="interaction">
    <interactant intactId="EBI-17438286">
        <id>Q8WTV1</id>
    </interactant>
    <interactant intactId="EBI-948266">
        <id>O14901</id>
        <label>KLF11</label>
    </interactant>
    <organismsDiffer>false</organismsDiffer>
    <experiments>3</experiments>
</comment>
<comment type="interaction">
    <interactant intactId="EBI-17438286">
        <id>Q8WTV1</id>
    </interactant>
    <interactant intactId="EBI-4314821">
        <id>Q13449</id>
        <label>LSAMP</label>
    </interactant>
    <organismsDiffer>false</organismsDiffer>
    <experiments>3</experiments>
</comment>
<comment type="interaction">
    <interactant intactId="EBI-17438286">
        <id>Q8WTV1</id>
    </interactant>
    <interactant intactId="EBI-6190702">
        <id>P28331-2</id>
        <label>NDUFS1</label>
    </interactant>
    <organismsDiffer>false</organismsDiffer>
    <experiments>3</experiments>
</comment>
<comment type="interaction">
    <interactant intactId="EBI-17438286">
        <id>Q8WTV1</id>
    </interactant>
    <interactant intactId="EBI-591778">
        <id>P61970</id>
        <label>NUTF2</label>
    </interactant>
    <organismsDiffer>false</organismsDiffer>
    <experiments>3</experiments>
</comment>
<comment type="interaction">
    <interactant intactId="EBI-17438286">
        <id>Q8WTV1</id>
    </interactant>
    <interactant intactId="EBI-602382">
        <id>Q16512</id>
        <label>PKN1</label>
    </interactant>
    <organismsDiffer>false</organismsDiffer>
    <experiments>3</experiments>
</comment>
<comment type="interaction">
    <interactant intactId="EBI-17438286">
        <id>Q8WTV1</id>
    </interactant>
    <interactant intactId="EBI-295301">
        <id>P24928</id>
        <label>POLR2A</label>
    </interactant>
    <organismsDiffer>false</organismsDiffer>
    <experiments>3</experiments>
</comment>
<comment type="interaction">
    <interactant intactId="EBI-17438286">
        <id>Q8WTV1</id>
    </interactant>
    <interactant intactId="EBI-413628">
        <id>P63000</id>
        <label>RAC1</label>
    </interactant>
    <organismsDiffer>false</organismsDiffer>
    <experiments>3</experiments>
</comment>
<comment type="interaction">
    <interactant intactId="EBI-17438286">
        <id>Q8WTV1</id>
    </interactant>
    <interactant intactId="EBI-372475">
        <id>P14678-2</id>
        <label>SNRPB</label>
    </interactant>
    <organismsDiffer>false</organismsDiffer>
    <experiments>3</experiments>
</comment>
<comment type="interaction">
    <interactant intactId="EBI-17438286">
        <id>Q8WTV1</id>
    </interactant>
    <interactant intactId="EBI-372899">
        <id>Q13148</id>
        <label>TARDBP</label>
    </interactant>
    <organismsDiffer>false</organismsDiffer>
    <experiments>6</experiments>
</comment>
<comment type="interaction">
    <interactant intactId="EBI-17438286">
        <id>Q8WTV1</id>
    </interactant>
    <interactant intactId="EBI-25894402">
        <id>P14679-2</id>
        <label>TYR</label>
    </interactant>
    <organismsDiffer>false</organismsDiffer>
    <experiments>3</experiments>
</comment>
<comment type="interaction">
    <interactant intactId="EBI-17438286">
        <id>Q8WTV1</id>
    </interactant>
    <interactant intactId="EBI-607755">
        <id>Q9BZL1</id>
        <label>UBL5</label>
    </interactant>
    <organismsDiffer>false</organismsDiffer>
    <experiments>3</experiments>
</comment>
<comment type="interaction">
    <interactant intactId="EBI-17438286">
        <id>Q8WTV1</id>
    </interactant>
    <interactant intactId="EBI-741480">
        <id>Q9UMX0</id>
        <label>UBQLN1</label>
    </interactant>
    <organismsDiffer>false</organismsDiffer>
    <experiments>3</experiments>
</comment>
<comment type="interaction">
    <interactant intactId="EBI-17438286">
        <id>Q8WTV1</id>
    </interactant>
    <interactant intactId="EBI-743128">
        <id>P14927</id>
        <label>UQCRB</label>
    </interactant>
    <organismsDiffer>false</organismsDiffer>
    <experiments>3</experiments>
</comment>
<comment type="interaction">
    <interactant intactId="EBI-17438286">
        <id>Q8WTV1</id>
    </interactant>
    <interactant intactId="EBI-1052596">
        <id>P31930</id>
        <label>UQCRC1</label>
    </interactant>
    <organismsDiffer>false</organismsDiffer>
    <experiments>3</experiments>
</comment>
<comment type="interaction">
    <interactant intactId="EBI-17438286">
        <id>Q8WTV1</id>
    </interactant>
    <interactant intactId="EBI-357430">
        <id>P61758</id>
        <label>VBP1</label>
    </interactant>
    <organismsDiffer>false</organismsDiffer>
    <experiments>3</experiments>
</comment>
<comment type="interaction">
    <interactant intactId="EBI-17438286">
        <id>Q8WTV1</id>
    </interactant>
    <interactant intactId="EBI-25900580">
        <id>Q9Y649</id>
    </interactant>
    <organismsDiffer>false</organismsDiffer>
    <experiments>3</experiments>
</comment>
<comment type="alternative products">
    <event type="alternative splicing"/>
    <isoform>
        <id>Q8WTV1-1</id>
        <name>1</name>
        <sequence type="displayed"/>
    </isoform>
    <isoform>
        <id>Q8WTV1-3</id>
        <name>2</name>
        <sequence type="described" ref="VSP_015136"/>
    </isoform>
    <isoform>
        <id>Q8WTV1-4</id>
        <name>3</name>
        <sequence type="described" ref="VSP_015137 VSP_015138 VSP_015139"/>
    </isoform>
</comment>
<comment type="tissue specificity">
    <text evidence="3">Highly expressed in heart, skeletal muscle and placenta. Weaker expression in brain, kidney and liver.</text>
</comment>
<feature type="chain" id="PRO_0000068644" description="THAP domain-containing protein 3">
    <location>
        <begin position="1"/>
        <end position="239"/>
    </location>
</feature>
<feature type="zinc finger region" description="THAP-type" evidence="1">
    <location>
        <begin position="1"/>
        <end position="82"/>
    </location>
</feature>
<feature type="region of interest" description="Disordered" evidence="2">
    <location>
        <begin position="84"/>
        <end position="177"/>
    </location>
</feature>
<feature type="short sequence motif" description="HCFC1-binding motif (HBM)">
    <location>
        <begin position="177"/>
        <end position="180"/>
    </location>
</feature>
<feature type="modified residue" description="Phosphoserine" evidence="6">
    <location>
        <position position="122"/>
    </location>
</feature>
<feature type="splice variant" id="VSP_015136" description="In isoform 2." evidence="5">
    <location>
        <position position="89"/>
    </location>
</feature>
<feature type="splice variant" id="VSP_015137" description="In isoform 3." evidence="4">
    <original>K</original>
    <variation>KTSPCRSQ</variation>
    <location>
        <position position="111"/>
    </location>
</feature>
<feature type="splice variant" id="VSP_015138" description="In isoform 3." evidence="4">
    <original>VSPRRPQATEAVGRPTGPAGLR</original>
    <variation>AMLFNVENGTPASREALWLSEE</variation>
    <location>
        <begin position="147"/>
        <end position="168"/>
    </location>
</feature>
<feature type="splice variant" id="VSP_015139" description="In isoform 3." evidence="4">
    <location>
        <begin position="169"/>
        <end position="239"/>
    </location>
</feature>
<feature type="mutagenesis site" description="Abolishes interaction with HCFC1." evidence="3">
    <original>DHSY</original>
    <variation>AAAA</variation>
    <location>
        <begin position="177"/>
        <end position="180"/>
    </location>
</feature>
<feature type="mutagenesis site" description="Abolishes interaction with HCFC1.">
    <original>H</original>
    <variation>A</variation>
    <location>
        <position position="178"/>
    </location>
</feature>
<feature type="mutagenesis site" description="Abolishes interaction with HCFC1.">
    <original>Y</original>
    <variation>A</variation>
    <location>
        <position position="180"/>
    </location>
</feature>
<feature type="sequence conflict" description="In Ref. 3; AAH05114/AAH92427." evidence="5" ref="3">
    <original>Q</original>
    <variation>R</variation>
    <location>
        <position position="227"/>
    </location>
</feature>
<reference key="1">
    <citation type="journal article" date="2004" name="Nat. Genet.">
        <title>Complete sequencing and characterization of 21,243 full-length human cDNAs.</title>
        <authorList>
            <person name="Ota T."/>
            <person name="Suzuki Y."/>
            <person name="Nishikawa T."/>
            <person name="Otsuki T."/>
            <person name="Sugiyama T."/>
            <person name="Irie R."/>
            <person name="Wakamatsu A."/>
            <person name="Hayashi K."/>
            <person name="Sato H."/>
            <person name="Nagai K."/>
            <person name="Kimura K."/>
            <person name="Makita H."/>
            <person name="Sekine M."/>
            <person name="Obayashi M."/>
            <person name="Nishi T."/>
            <person name="Shibahara T."/>
            <person name="Tanaka T."/>
            <person name="Ishii S."/>
            <person name="Yamamoto J."/>
            <person name="Saito K."/>
            <person name="Kawai Y."/>
            <person name="Isono Y."/>
            <person name="Nakamura Y."/>
            <person name="Nagahari K."/>
            <person name="Murakami K."/>
            <person name="Yasuda T."/>
            <person name="Iwayanagi T."/>
            <person name="Wagatsuma M."/>
            <person name="Shiratori A."/>
            <person name="Sudo H."/>
            <person name="Hosoiri T."/>
            <person name="Kaku Y."/>
            <person name="Kodaira H."/>
            <person name="Kondo H."/>
            <person name="Sugawara M."/>
            <person name="Takahashi M."/>
            <person name="Kanda K."/>
            <person name="Yokoi T."/>
            <person name="Furuya T."/>
            <person name="Kikkawa E."/>
            <person name="Omura Y."/>
            <person name="Abe K."/>
            <person name="Kamihara K."/>
            <person name="Katsuta N."/>
            <person name="Sato K."/>
            <person name="Tanikawa M."/>
            <person name="Yamazaki M."/>
            <person name="Ninomiya K."/>
            <person name="Ishibashi T."/>
            <person name="Yamashita H."/>
            <person name="Murakawa K."/>
            <person name="Fujimori K."/>
            <person name="Tanai H."/>
            <person name="Kimata M."/>
            <person name="Watanabe M."/>
            <person name="Hiraoka S."/>
            <person name="Chiba Y."/>
            <person name="Ishida S."/>
            <person name="Ono Y."/>
            <person name="Takiguchi S."/>
            <person name="Watanabe S."/>
            <person name="Yosida M."/>
            <person name="Hotuta T."/>
            <person name="Kusano J."/>
            <person name="Kanehori K."/>
            <person name="Takahashi-Fujii A."/>
            <person name="Hara H."/>
            <person name="Tanase T.-O."/>
            <person name="Nomura Y."/>
            <person name="Togiya S."/>
            <person name="Komai F."/>
            <person name="Hara R."/>
            <person name="Takeuchi K."/>
            <person name="Arita M."/>
            <person name="Imose N."/>
            <person name="Musashino K."/>
            <person name="Yuuki H."/>
            <person name="Oshima A."/>
            <person name="Sasaki N."/>
            <person name="Aotsuka S."/>
            <person name="Yoshikawa Y."/>
            <person name="Matsunawa H."/>
            <person name="Ichihara T."/>
            <person name="Shiohata N."/>
            <person name="Sano S."/>
            <person name="Moriya S."/>
            <person name="Momiyama H."/>
            <person name="Satoh N."/>
            <person name="Takami S."/>
            <person name="Terashima Y."/>
            <person name="Suzuki O."/>
            <person name="Nakagawa S."/>
            <person name="Senoh A."/>
            <person name="Mizoguchi H."/>
            <person name="Goto Y."/>
            <person name="Shimizu F."/>
            <person name="Wakebe H."/>
            <person name="Hishigaki H."/>
            <person name="Watanabe T."/>
            <person name="Sugiyama A."/>
            <person name="Takemoto M."/>
            <person name="Kawakami B."/>
            <person name="Yamazaki M."/>
            <person name="Watanabe K."/>
            <person name="Kumagai A."/>
            <person name="Itakura S."/>
            <person name="Fukuzumi Y."/>
            <person name="Fujimori Y."/>
            <person name="Komiyama M."/>
            <person name="Tashiro H."/>
            <person name="Tanigami A."/>
            <person name="Fujiwara T."/>
            <person name="Ono T."/>
            <person name="Yamada K."/>
            <person name="Fujii Y."/>
            <person name="Ozaki K."/>
            <person name="Hirao M."/>
            <person name="Ohmori Y."/>
            <person name="Kawabata A."/>
            <person name="Hikiji T."/>
            <person name="Kobatake N."/>
            <person name="Inagaki H."/>
            <person name="Ikema Y."/>
            <person name="Okamoto S."/>
            <person name="Okitani R."/>
            <person name="Kawakami T."/>
            <person name="Noguchi S."/>
            <person name="Itoh T."/>
            <person name="Shigeta K."/>
            <person name="Senba T."/>
            <person name="Matsumura K."/>
            <person name="Nakajima Y."/>
            <person name="Mizuno T."/>
            <person name="Morinaga M."/>
            <person name="Sasaki M."/>
            <person name="Togashi T."/>
            <person name="Oyama M."/>
            <person name="Hata H."/>
            <person name="Watanabe M."/>
            <person name="Komatsu T."/>
            <person name="Mizushima-Sugano J."/>
            <person name="Satoh T."/>
            <person name="Shirai Y."/>
            <person name="Takahashi Y."/>
            <person name="Nakagawa K."/>
            <person name="Okumura K."/>
            <person name="Nagase T."/>
            <person name="Nomura N."/>
            <person name="Kikuchi H."/>
            <person name="Masuho Y."/>
            <person name="Yamashita R."/>
            <person name="Nakai K."/>
            <person name="Yada T."/>
            <person name="Nakamura Y."/>
            <person name="Ohara O."/>
            <person name="Isogai T."/>
            <person name="Sugano S."/>
        </authorList>
    </citation>
    <scope>NUCLEOTIDE SEQUENCE [LARGE SCALE MRNA] (ISOFORM 3)</scope>
    <source>
        <tissue>Teratocarcinoma</tissue>
    </source>
</reference>
<reference key="2">
    <citation type="journal article" date="2006" name="Nature">
        <title>The DNA sequence and biological annotation of human chromosome 1.</title>
        <authorList>
            <person name="Gregory S.G."/>
            <person name="Barlow K.F."/>
            <person name="McLay K.E."/>
            <person name="Kaul R."/>
            <person name="Swarbreck D."/>
            <person name="Dunham A."/>
            <person name="Scott C.E."/>
            <person name="Howe K.L."/>
            <person name="Woodfine K."/>
            <person name="Spencer C.C.A."/>
            <person name="Jones M.C."/>
            <person name="Gillson C."/>
            <person name="Searle S."/>
            <person name="Zhou Y."/>
            <person name="Kokocinski F."/>
            <person name="McDonald L."/>
            <person name="Evans R."/>
            <person name="Phillips K."/>
            <person name="Atkinson A."/>
            <person name="Cooper R."/>
            <person name="Jones C."/>
            <person name="Hall R.E."/>
            <person name="Andrews T.D."/>
            <person name="Lloyd C."/>
            <person name="Ainscough R."/>
            <person name="Almeida J.P."/>
            <person name="Ambrose K.D."/>
            <person name="Anderson F."/>
            <person name="Andrew R.W."/>
            <person name="Ashwell R.I.S."/>
            <person name="Aubin K."/>
            <person name="Babbage A.K."/>
            <person name="Bagguley C.L."/>
            <person name="Bailey J."/>
            <person name="Beasley H."/>
            <person name="Bethel G."/>
            <person name="Bird C.P."/>
            <person name="Bray-Allen S."/>
            <person name="Brown J.Y."/>
            <person name="Brown A.J."/>
            <person name="Buckley D."/>
            <person name="Burton J."/>
            <person name="Bye J."/>
            <person name="Carder C."/>
            <person name="Chapman J.C."/>
            <person name="Clark S.Y."/>
            <person name="Clarke G."/>
            <person name="Clee C."/>
            <person name="Cobley V."/>
            <person name="Collier R.E."/>
            <person name="Corby N."/>
            <person name="Coville G.J."/>
            <person name="Davies J."/>
            <person name="Deadman R."/>
            <person name="Dunn M."/>
            <person name="Earthrowl M."/>
            <person name="Ellington A.G."/>
            <person name="Errington H."/>
            <person name="Frankish A."/>
            <person name="Frankland J."/>
            <person name="French L."/>
            <person name="Garner P."/>
            <person name="Garnett J."/>
            <person name="Gay L."/>
            <person name="Ghori M.R.J."/>
            <person name="Gibson R."/>
            <person name="Gilby L.M."/>
            <person name="Gillett W."/>
            <person name="Glithero R.J."/>
            <person name="Grafham D.V."/>
            <person name="Griffiths C."/>
            <person name="Griffiths-Jones S."/>
            <person name="Grocock R."/>
            <person name="Hammond S."/>
            <person name="Harrison E.S.I."/>
            <person name="Hart E."/>
            <person name="Haugen E."/>
            <person name="Heath P.D."/>
            <person name="Holmes S."/>
            <person name="Holt K."/>
            <person name="Howden P.J."/>
            <person name="Hunt A.R."/>
            <person name="Hunt S.E."/>
            <person name="Hunter G."/>
            <person name="Isherwood J."/>
            <person name="James R."/>
            <person name="Johnson C."/>
            <person name="Johnson D."/>
            <person name="Joy A."/>
            <person name="Kay M."/>
            <person name="Kershaw J.K."/>
            <person name="Kibukawa M."/>
            <person name="Kimberley A.M."/>
            <person name="King A."/>
            <person name="Knights A.J."/>
            <person name="Lad H."/>
            <person name="Laird G."/>
            <person name="Lawlor S."/>
            <person name="Leongamornlert D.A."/>
            <person name="Lloyd D.M."/>
            <person name="Loveland J."/>
            <person name="Lovell J."/>
            <person name="Lush M.J."/>
            <person name="Lyne R."/>
            <person name="Martin S."/>
            <person name="Mashreghi-Mohammadi M."/>
            <person name="Matthews L."/>
            <person name="Matthews N.S.W."/>
            <person name="McLaren S."/>
            <person name="Milne S."/>
            <person name="Mistry S."/>
            <person name="Moore M.J.F."/>
            <person name="Nickerson T."/>
            <person name="O'Dell C.N."/>
            <person name="Oliver K."/>
            <person name="Palmeiri A."/>
            <person name="Palmer S.A."/>
            <person name="Parker A."/>
            <person name="Patel D."/>
            <person name="Pearce A.V."/>
            <person name="Peck A.I."/>
            <person name="Pelan S."/>
            <person name="Phelps K."/>
            <person name="Phillimore B.J."/>
            <person name="Plumb R."/>
            <person name="Rajan J."/>
            <person name="Raymond C."/>
            <person name="Rouse G."/>
            <person name="Saenphimmachak C."/>
            <person name="Sehra H.K."/>
            <person name="Sheridan E."/>
            <person name="Shownkeen R."/>
            <person name="Sims S."/>
            <person name="Skuce C.D."/>
            <person name="Smith M."/>
            <person name="Steward C."/>
            <person name="Subramanian S."/>
            <person name="Sycamore N."/>
            <person name="Tracey A."/>
            <person name="Tromans A."/>
            <person name="Van Helmond Z."/>
            <person name="Wall M."/>
            <person name="Wallis J.M."/>
            <person name="White S."/>
            <person name="Whitehead S.L."/>
            <person name="Wilkinson J.E."/>
            <person name="Willey D.L."/>
            <person name="Williams H."/>
            <person name="Wilming L."/>
            <person name="Wray P.W."/>
            <person name="Wu Z."/>
            <person name="Coulson A."/>
            <person name="Vaudin M."/>
            <person name="Sulston J.E."/>
            <person name="Durbin R.M."/>
            <person name="Hubbard T."/>
            <person name="Wooster R."/>
            <person name="Dunham I."/>
            <person name="Carter N.P."/>
            <person name="McVean G."/>
            <person name="Ross M.T."/>
            <person name="Harrow J."/>
            <person name="Olson M.V."/>
            <person name="Beck S."/>
            <person name="Rogers J."/>
            <person name="Bentley D.R."/>
        </authorList>
    </citation>
    <scope>NUCLEOTIDE SEQUENCE [LARGE SCALE GENOMIC DNA]</scope>
</reference>
<reference key="3">
    <citation type="journal article" date="2004" name="Genome Res.">
        <title>The status, quality, and expansion of the NIH full-length cDNA project: the Mammalian Gene Collection (MGC).</title>
        <authorList>
            <consortium name="The MGC Project Team"/>
        </authorList>
    </citation>
    <scope>NUCLEOTIDE SEQUENCE [LARGE SCALE MRNA] (ISOFORM 1)</scope>
    <scope>NUCLEOTIDE SEQUENCE [LARGE SCALE MRNA] OF 93-239 (ISOFORMS 1/2)</scope>
    <source>
        <tissue>Brain</tissue>
        <tissue>Uterus</tissue>
    </source>
</reference>
<reference key="4">
    <citation type="journal article" date="2010" name="J. Biol. Chem.">
        <title>The THAP-zinc finger protein THAP1 associates with coactivator HCF-1 and O-GlcNAc transferase: a link between DYT6 and DYT3 dystonias.</title>
        <authorList>
            <person name="Mazars R."/>
            <person name="Gonzalez-de-Peredo A."/>
            <person name="Cayrol C."/>
            <person name="Lavigne A.C."/>
            <person name="Vogel J.L."/>
            <person name="Ortega N."/>
            <person name="Lacroix C."/>
            <person name="Gautier V."/>
            <person name="Huet G."/>
            <person name="Ray A."/>
            <person name="Monsarrat B."/>
            <person name="Kristie T.M."/>
            <person name="Girard J.P."/>
        </authorList>
    </citation>
    <scope>INTERACTION WITH HCFC1 AND OGT</scope>
    <scope>TISSUE SPECIFICITY</scope>
    <scope>IDENTIFICATION BY MASS SPECTROMETRY</scope>
    <scope>FUNCTION</scope>
    <scope>MUTAGENESIS OF 177-ASP--TYR-180</scope>
</reference>
<reference key="5">
    <citation type="journal article" date="2013" name="J. Proteome Res.">
        <title>Toward a comprehensive characterization of a human cancer cell phosphoproteome.</title>
        <authorList>
            <person name="Zhou H."/>
            <person name="Di Palma S."/>
            <person name="Preisinger C."/>
            <person name="Peng M."/>
            <person name="Polat A.N."/>
            <person name="Heck A.J."/>
            <person name="Mohammed S."/>
        </authorList>
    </citation>
    <scope>PHOSPHORYLATION [LARGE SCALE ANALYSIS] AT SER-122</scope>
    <scope>IDENTIFICATION BY MASS SPECTROMETRY [LARGE SCALE ANALYSIS]</scope>
    <source>
        <tissue>Cervix carcinoma</tissue>
        <tissue>Erythroleukemia</tissue>
    </source>
</reference>
<gene>
    <name type="primary">THAP3</name>
</gene>
<protein>
    <recommendedName>
        <fullName>THAP domain-containing protein 3</fullName>
    </recommendedName>
</protein>
<organism>
    <name type="scientific">Homo sapiens</name>
    <name type="common">Human</name>
    <dbReference type="NCBI Taxonomy" id="9606"/>
    <lineage>
        <taxon>Eukaryota</taxon>
        <taxon>Metazoa</taxon>
        <taxon>Chordata</taxon>
        <taxon>Craniata</taxon>
        <taxon>Vertebrata</taxon>
        <taxon>Euteleostomi</taxon>
        <taxon>Mammalia</taxon>
        <taxon>Eutheria</taxon>
        <taxon>Euarchontoglires</taxon>
        <taxon>Primates</taxon>
        <taxon>Haplorrhini</taxon>
        <taxon>Catarrhini</taxon>
        <taxon>Hominidae</taxon>
        <taxon>Homo</taxon>
    </lineage>
</organism>
<name>THAP3_HUMAN</name>
<keyword id="KW-0025">Alternative splicing</keyword>
<keyword id="KW-0238">DNA-binding</keyword>
<keyword id="KW-0479">Metal-binding</keyword>
<keyword id="KW-0597">Phosphoprotein</keyword>
<keyword id="KW-1267">Proteomics identification</keyword>
<keyword id="KW-1185">Reference proteome</keyword>
<keyword id="KW-0862">Zinc</keyword>
<keyword id="KW-0863">Zinc-finger</keyword>
<proteinExistence type="evidence at protein level"/>
<evidence type="ECO:0000255" key="1">
    <source>
        <dbReference type="PROSITE-ProRule" id="PRU00309"/>
    </source>
</evidence>
<evidence type="ECO:0000256" key="2">
    <source>
        <dbReference type="SAM" id="MobiDB-lite"/>
    </source>
</evidence>
<evidence type="ECO:0000269" key="3">
    <source>
    </source>
</evidence>
<evidence type="ECO:0000303" key="4">
    <source>
    </source>
</evidence>
<evidence type="ECO:0000305" key="5"/>
<evidence type="ECO:0007744" key="6">
    <source>
    </source>
</evidence>
<sequence>MPKSCAARQCCNRYSSRRKQLTFHRFPFSRPELLKEWVLNIGRGNFKPKQHTVICSEHFRPECFSAFGNRKNLKHNAVPTVFAFQDPTQQVRENTDPASERGNASSSQKEKVLPEAGAGEDSPGRNMDTALEELQLPPNAEGHVKQVSPRRPQATEAVGRPTGPAGLRRTPNKQPSDHSYALLDLDSLKKKLFLTLKENEKLRKRLQAQRLVMRRMSSRLRACKGHQGLQARLGPEQQS</sequence>
<accession>Q8WTV1</accession>
<accession>Q569K1</accession>
<accession>Q5TH66</accession>
<accession>Q5TH67</accession>
<accession>Q8N8T6</accession>
<accession>Q9BSC7</accession>
<accession>Q9Y3H2</accession>
<accession>Q9Y3H3</accession>